<comment type="function">
    <text evidence="1">Produces ATP from ADP in the presence of a proton gradient across the membrane. The gamma chain is believed to be important in regulating ATPase activity and the flow of protons through the CF(0) complex.</text>
</comment>
<comment type="subunit">
    <text evidence="1">F-type ATPases have 2 components, CF(1) - the catalytic core - and CF(0) - the membrane proton channel. CF(1) has five subunits: alpha(3), beta(3), gamma(1), delta(1), epsilon(1). CF(0) has three main subunits: a, b and c.</text>
</comment>
<comment type="subcellular location">
    <subcellularLocation>
        <location evidence="1">Cell inner membrane</location>
        <topology evidence="1">Peripheral membrane protein</topology>
    </subcellularLocation>
</comment>
<comment type="similarity">
    <text evidence="1">Belongs to the ATPase gamma chain family.</text>
</comment>
<name>ATPG_NITMU</name>
<accession>Q2YCA4</accession>
<reference key="1">
    <citation type="submission" date="2005-08" db="EMBL/GenBank/DDBJ databases">
        <title>Complete sequence of chromosome 1 of Nitrosospira multiformis ATCC 25196.</title>
        <authorList>
            <person name="Copeland A."/>
            <person name="Lucas S."/>
            <person name="Lapidus A."/>
            <person name="Barry K."/>
            <person name="Detter J.C."/>
            <person name="Glavina T."/>
            <person name="Hammon N."/>
            <person name="Israni S."/>
            <person name="Pitluck S."/>
            <person name="Chain P."/>
            <person name="Malfatti S."/>
            <person name="Shin M."/>
            <person name="Vergez L."/>
            <person name="Schmutz J."/>
            <person name="Larimer F."/>
            <person name="Land M."/>
            <person name="Hauser L."/>
            <person name="Kyrpides N."/>
            <person name="Lykidis A."/>
            <person name="Richardson P."/>
        </authorList>
    </citation>
    <scope>NUCLEOTIDE SEQUENCE [LARGE SCALE GENOMIC DNA]</scope>
    <source>
        <strain>ATCC 25196 / NCIMB 11849 / C 71</strain>
    </source>
</reference>
<sequence length="293" mass="32924">MAGSREIRNKIKSVKNTQKITRAMEMVAASKMRRAQERMKKARPYGEKIRNVAAHMSRAYTEYRHPFLIERDTVKRIGIIVVTSDKGLCGGLNTNVLRMAVSKMKAWEAEGEQIEVCCIGNKGLGFMNRMGANVISHAVSLGDAPDLERLIGAIKILLDGYNQDRFDRVYLFYTRFINTMKQEPVMEQLLPLSDERLRASDRPTGQRGVWDYIYEPEAKPVIDDIMVRYVEALIYQALTENIASEQSARMVAMKAASDNAGNVINELTLIYNKSRQAAITKELSEIVGGAAAV</sequence>
<organism>
    <name type="scientific">Nitrosospira multiformis (strain ATCC 25196 / NCIMB 11849 / C 71)</name>
    <dbReference type="NCBI Taxonomy" id="323848"/>
    <lineage>
        <taxon>Bacteria</taxon>
        <taxon>Pseudomonadati</taxon>
        <taxon>Pseudomonadota</taxon>
        <taxon>Betaproteobacteria</taxon>
        <taxon>Nitrosomonadales</taxon>
        <taxon>Nitrosomonadaceae</taxon>
        <taxon>Nitrosospira</taxon>
    </lineage>
</organism>
<evidence type="ECO:0000255" key="1">
    <source>
        <dbReference type="HAMAP-Rule" id="MF_00815"/>
    </source>
</evidence>
<keyword id="KW-0066">ATP synthesis</keyword>
<keyword id="KW-0997">Cell inner membrane</keyword>
<keyword id="KW-1003">Cell membrane</keyword>
<keyword id="KW-0139">CF(1)</keyword>
<keyword id="KW-0375">Hydrogen ion transport</keyword>
<keyword id="KW-0406">Ion transport</keyword>
<keyword id="KW-0472">Membrane</keyword>
<keyword id="KW-1185">Reference proteome</keyword>
<keyword id="KW-0813">Transport</keyword>
<protein>
    <recommendedName>
        <fullName evidence="1">ATP synthase gamma chain</fullName>
    </recommendedName>
    <alternativeName>
        <fullName evidence="1">ATP synthase F1 sector gamma subunit</fullName>
    </alternativeName>
    <alternativeName>
        <fullName evidence="1">F-ATPase gamma subunit</fullName>
    </alternativeName>
</protein>
<gene>
    <name evidence="1" type="primary">atpG</name>
    <name type="ordered locus">Nmul_A0309</name>
</gene>
<dbReference type="EMBL" id="CP000103">
    <property type="protein sequence ID" value="ABB73617.1"/>
    <property type="molecule type" value="Genomic_DNA"/>
</dbReference>
<dbReference type="RefSeq" id="WP_011379671.1">
    <property type="nucleotide sequence ID" value="NC_007614.1"/>
</dbReference>
<dbReference type="SMR" id="Q2YCA4"/>
<dbReference type="STRING" id="323848.Nmul_A0309"/>
<dbReference type="KEGG" id="nmu:Nmul_A0309"/>
<dbReference type="eggNOG" id="COG0224">
    <property type="taxonomic scope" value="Bacteria"/>
</dbReference>
<dbReference type="HOGENOM" id="CLU_050669_0_1_4"/>
<dbReference type="OrthoDB" id="9812769at2"/>
<dbReference type="Proteomes" id="UP000002718">
    <property type="component" value="Chromosome"/>
</dbReference>
<dbReference type="GO" id="GO:0005886">
    <property type="term" value="C:plasma membrane"/>
    <property type="evidence" value="ECO:0007669"/>
    <property type="project" value="UniProtKB-SubCell"/>
</dbReference>
<dbReference type="GO" id="GO:0045259">
    <property type="term" value="C:proton-transporting ATP synthase complex"/>
    <property type="evidence" value="ECO:0007669"/>
    <property type="project" value="UniProtKB-KW"/>
</dbReference>
<dbReference type="GO" id="GO:0005524">
    <property type="term" value="F:ATP binding"/>
    <property type="evidence" value="ECO:0007669"/>
    <property type="project" value="UniProtKB-UniRule"/>
</dbReference>
<dbReference type="GO" id="GO:0046933">
    <property type="term" value="F:proton-transporting ATP synthase activity, rotational mechanism"/>
    <property type="evidence" value="ECO:0007669"/>
    <property type="project" value="UniProtKB-UniRule"/>
</dbReference>
<dbReference type="GO" id="GO:0042777">
    <property type="term" value="P:proton motive force-driven plasma membrane ATP synthesis"/>
    <property type="evidence" value="ECO:0007669"/>
    <property type="project" value="UniProtKB-UniRule"/>
</dbReference>
<dbReference type="CDD" id="cd12151">
    <property type="entry name" value="F1-ATPase_gamma"/>
    <property type="match status" value="1"/>
</dbReference>
<dbReference type="FunFam" id="1.10.287.80:FF:000005">
    <property type="entry name" value="ATP synthase gamma chain"/>
    <property type="match status" value="1"/>
</dbReference>
<dbReference type="Gene3D" id="3.40.1380.10">
    <property type="match status" value="1"/>
</dbReference>
<dbReference type="Gene3D" id="1.10.287.80">
    <property type="entry name" value="ATP synthase, gamma subunit, helix hairpin domain"/>
    <property type="match status" value="1"/>
</dbReference>
<dbReference type="HAMAP" id="MF_00815">
    <property type="entry name" value="ATP_synth_gamma_bact"/>
    <property type="match status" value="1"/>
</dbReference>
<dbReference type="InterPro" id="IPR035968">
    <property type="entry name" value="ATP_synth_F1_ATPase_gsu"/>
</dbReference>
<dbReference type="InterPro" id="IPR000131">
    <property type="entry name" value="ATP_synth_F1_gsu"/>
</dbReference>
<dbReference type="InterPro" id="IPR023632">
    <property type="entry name" value="ATP_synth_F1_gsu_CS"/>
</dbReference>
<dbReference type="NCBIfam" id="TIGR01146">
    <property type="entry name" value="ATPsyn_F1gamma"/>
    <property type="match status" value="1"/>
</dbReference>
<dbReference type="NCBIfam" id="NF004144">
    <property type="entry name" value="PRK05621.1-1"/>
    <property type="match status" value="1"/>
</dbReference>
<dbReference type="PANTHER" id="PTHR11693">
    <property type="entry name" value="ATP SYNTHASE GAMMA CHAIN"/>
    <property type="match status" value="1"/>
</dbReference>
<dbReference type="PANTHER" id="PTHR11693:SF22">
    <property type="entry name" value="ATP SYNTHASE SUBUNIT GAMMA, MITOCHONDRIAL"/>
    <property type="match status" value="1"/>
</dbReference>
<dbReference type="Pfam" id="PF00231">
    <property type="entry name" value="ATP-synt"/>
    <property type="match status" value="1"/>
</dbReference>
<dbReference type="PRINTS" id="PR00126">
    <property type="entry name" value="ATPASEGAMMA"/>
</dbReference>
<dbReference type="SUPFAM" id="SSF52943">
    <property type="entry name" value="ATP synthase (F1-ATPase), gamma subunit"/>
    <property type="match status" value="1"/>
</dbReference>
<dbReference type="PROSITE" id="PS00153">
    <property type="entry name" value="ATPASE_GAMMA"/>
    <property type="match status" value="1"/>
</dbReference>
<feature type="chain" id="PRO_1000053268" description="ATP synthase gamma chain">
    <location>
        <begin position="1"/>
        <end position="293"/>
    </location>
</feature>
<proteinExistence type="inferred from homology"/>